<name>RRP36_TRIVH</name>
<keyword id="KW-0175">Coiled coil</keyword>
<keyword id="KW-0539">Nucleus</keyword>
<keyword id="KW-0687">Ribonucleoprotein</keyword>
<keyword id="KW-0690">Ribosome biogenesis</keyword>
<keyword id="KW-0698">rRNA processing</keyword>
<proteinExistence type="inferred from homology"/>
<gene>
    <name type="primary">RRP36</name>
    <name type="ORF">TRV_02066</name>
</gene>
<evidence type="ECO:0000250" key="1"/>
<evidence type="ECO:0000255" key="2"/>
<evidence type="ECO:0000256" key="3">
    <source>
        <dbReference type="SAM" id="MobiDB-lite"/>
    </source>
</evidence>
<evidence type="ECO:0000305" key="4"/>
<organism>
    <name type="scientific">Trichophyton verrucosum (strain HKI 0517)</name>
    <dbReference type="NCBI Taxonomy" id="663202"/>
    <lineage>
        <taxon>Eukaryota</taxon>
        <taxon>Fungi</taxon>
        <taxon>Dikarya</taxon>
        <taxon>Ascomycota</taxon>
        <taxon>Pezizomycotina</taxon>
        <taxon>Eurotiomycetes</taxon>
        <taxon>Eurotiomycetidae</taxon>
        <taxon>Onygenales</taxon>
        <taxon>Arthrodermataceae</taxon>
        <taxon>Trichophyton</taxon>
    </lineage>
</organism>
<sequence>MALSGILSKRVIAHRADENELEDDFSSSEELNTLGSEDDEDEDEDEDEGEGEGDESENEEAPDNASSEDDGDNDIKSSLSQISFGALAKAQQSLGPLKKGAKRKHGSEEEEEEDNKNTKYKKSKSDALNELRERIRRAKEEKASKSEGSRDNELLDKKHKEARSSKHAPAVQSSKYAVSRRRVVVDGENVAQVKSRDPRFDSAVQSYSHNAKSSSYATSHSDLAAAKNYAFLNEYRDAELKELEEKLRRSKKDDEKARLKKMITSMKDRKRAMENRERERQVLAKHRKKERELIKEGKKEKAWFLKKADLKKEALKEKYESMGAKERQKGIERRRKKVASKEKKEMPRSRRMVEG</sequence>
<reference key="1">
    <citation type="journal article" date="2011" name="Genome Biol.">
        <title>Comparative and functional genomics provide insights into the pathogenicity of dermatophytic fungi.</title>
        <authorList>
            <person name="Burmester A."/>
            <person name="Shelest E."/>
            <person name="Gloeckner G."/>
            <person name="Heddergott C."/>
            <person name="Schindler S."/>
            <person name="Staib P."/>
            <person name="Heidel A."/>
            <person name="Felder M."/>
            <person name="Petzold A."/>
            <person name="Szafranski K."/>
            <person name="Feuermann M."/>
            <person name="Pedruzzi I."/>
            <person name="Priebe S."/>
            <person name="Groth M."/>
            <person name="Winkler R."/>
            <person name="Li W."/>
            <person name="Kniemeyer O."/>
            <person name="Schroeckh V."/>
            <person name="Hertweck C."/>
            <person name="Hube B."/>
            <person name="White T.C."/>
            <person name="Platzer M."/>
            <person name="Guthke R."/>
            <person name="Heitman J."/>
            <person name="Woestemeyer J."/>
            <person name="Zipfel P.F."/>
            <person name="Monod M."/>
            <person name="Brakhage A.A."/>
        </authorList>
    </citation>
    <scope>NUCLEOTIDE SEQUENCE [LARGE SCALE GENOMIC DNA]</scope>
    <source>
        <strain>HKI 0517</strain>
    </source>
</reference>
<feature type="chain" id="PRO_0000397664" description="rRNA biogenesis protein RRP36">
    <location>
        <begin position="1"/>
        <end position="355"/>
    </location>
</feature>
<feature type="region of interest" description="Disordered" evidence="3">
    <location>
        <begin position="1"/>
        <end position="178"/>
    </location>
</feature>
<feature type="region of interest" description="Disordered" evidence="3">
    <location>
        <begin position="193"/>
        <end position="217"/>
    </location>
</feature>
<feature type="region of interest" description="Disordered" evidence="3">
    <location>
        <begin position="263"/>
        <end position="284"/>
    </location>
</feature>
<feature type="region of interest" description="Disordered" evidence="3">
    <location>
        <begin position="319"/>
        <end position="355"/>
    </location>
</feature>
<feature type="coiled-coil region" evidence="2">
    <location>
        <begin position="111"/>
        <end position="150"/>
    </location>
</feature>
<feature type="coiled-coil region" evidence="2">
    <location>
        <begin position="233"/>
        <end position="325"/>
    </location>
</feature>
<feature type="compositionally biased region" description="Acidic residues" evidence="3">
    <location>
        <begin position="36"/>
        <end position="72"/>
    </location>
</feature>
<feature type="compositionally biased region" description="Basic and acidic residues" evidence="3">
    <location>
        <begin position="123"/>
        <end position="164"/>
    </location>
</feature>
<feature type="compositionally biased region" description="Polar residues" evidence="3">
    <location>
        <begin position="203"/>
        <end position="217"/>
    </location>
</feature>
<feature type="compositionally biased region" description="Basic and acidic residues" evidence="3">
    <location>
        <begin position="271"/>
        <end position="282"/>
    </location>
</feature>
<feature type="compositionally biased region" description="Basic and acidic residues" evidence="3">
    <location>
        <begin position="319"/>
        <end position="331"/>
    </location>
</feature>
<feature type="compositionally biased region" description="Basic and acidic residues" evidence="3">
    <location>
        <begin position="339"/>
        <end position="355"/>
    </location>
</feature>
<accession>D4D4Q0</accession>
<dbReference type="EMBL" id="ACYE01000107">
    <property type="protein sequence ID" value="EFE43173.1"/>
    <property type="molecule type" value="Genomic_DNA"/>
</dbReference>
<dbReference type="RefSeq" id="XP_003023791.1">
    <property type="nucleotide sequence ID" value="XM_003023745.1"/>
</dbReference>
<dbReference type="SMR" id="D4D4Q0"/>
<dbReference type="GeneID" id="9582365"/>
<dbReference type="KEGG" id="tve:TRV_02066"/>
<dbReference type="HOGENOM" id="CLU_048802_0_0_1"/>
<dbReference type="OrthoDB" id="7182at34384"/>
<dbReference type="Proteomes" id="UP000008383">
    <property type="component" value="Unassembled WGS sequence"/>
</dbReference>
<dbReference type="GO" id="GO:0030686">
    <property type="term" value="C:90S preribosome"/>
    <property type="evidence" value="ECO:0007669"/>
    <property type="project" value="TreeGrafter"/>
</dbReference>
<dbReference type="GO" id="GO:0005730">
    <property type="term" value="C:nucleolus"/>
    <property type="evidence" value="ECO:0007669"/>
    <property type="project" value="UniProtKB-SubCell"/>
</dbReference>
<dbReference type="GO" id="GO:0000462">
    <property type="term" value="P:maturation of SSU-rRNA from tricistronic rRNA transcript (SSU-rRNA, 5.8S rRNA, LSU-rRNA)"/>
    <property type="evidence" value="ECO:0007669"/>
    <property type="project" value="TreeGrafter"/>
</dbReference>
<dbReference type="InterPro" id="IPR009292">
    <property type="entry name" value="RRP36"/>
</dbReference>
<dbReference type="PANTHER" id="PTHR21738">
    <property type="entry name" value="RIBOSOMAL RNA PROCESSING PROTEIN 36 HOMOLOG"/>
    <property type="match status" value="1"/>
</dbReference>
<dbReference type="PANTHER" id="PTHR21738:SF0">
    <property type="entry name" value="RIBOSOMAL RNA PROCESSING PROTEIN 36 HOMOLOG"/>
    <property type="match status" value="1"/>
</dbReference>
<dbReference type="Pfam" id="PF06102">
    <property type="entry name" value="RRP36"/>
    <property type="match status" value="1"/>
</dbReference>
<comment type="function">
    <text evidence="1">Component of the 90S pre-ribosome involved in the maturation of rRNAs. Required for early cleavages of the pre-RNAs in the 40S ribosomal subunit maturation pathway (By similarity).</text>
</comment>
<comment type="subunit">
    <text evidence="1">Associates with 90S and pre-40S pre-ribosomal particles.</text>
</comment>
<comment type="subcellular location">
    <subcellularLocation>
        <location evidence="1">Nucleus</location>
        <location evidence="1">Nucleolus</location>
    </subcellularLocation>
</comment>
<comment type="similarity">
    <text evidence="4">Belongs to the RRP36 family.</text>
</comment>
<protein>
    <recommendedName>
        <fullName>rRNA biogenesis protein RRP36</fullName>
    </recommendedName>
    <alternativeName>
        <fullName>Ribosomal RNA-processing protein 36</fullName>
    </alternativeName>
</protein>